<accession>Q2SRV9</accession>
<evidence type="ECO:0000255" key="1">
    <source>
        <dbReference type="HAMAP-Rule" id="MF_01454"/>
    </source>
</evidence>
<evidence type="ECO:0000255" key="2">
    <source>
        <dbReference type="PROSITE-ProRule" id="PRU01229"/>
    </source>
</evidence>
<evidence type="ECO:0000255" key="3">
    <source>
        <dbReference type="PROSITE-ProRule" id="PRU01231"/>
    </source>
</evidence>
<protein>
    <recommendedName>
        <fullName evidence="1">GTPase Obg</fullName>
        <ecNumber evidence="1">3.6.5.-</ecNumber>
    </recommendedName>
    <alternativeName>
        <fullName evidence="1">GTP-binding protein Obg</fullName>
    </alternativeName>
</protein>
<gene>
    <name evidence="1" type="primary">obg</name>
    <name type="ordered locus">MCAP_0532</name>
</gene>
<name>OBG_MYCCT</name>
<keyword id="KW-0963">Cytoplasm</keyword>
<keyword id="KW-0342">GTP-binding</keyword>
<keyword id="KW-0378">Hydrolase</keyword>
<keyword id="KW-0460">Magnesium</keyword>
<keyword id="KW-0479">Metal-binding</keyword>
<keyword id="KW-0547">Nucleotide-binding</keyword>
<organism>
    <name type="scientific">Mycoplasma capricolum subsp. capricolum (strain California kid / ATCC 27343 / NCTC 10154)</name>
    <dbReference type="NCBI Taxonomy" id="340047"/>
    <lineage>
        <taxon>Bacteria</taxon>
        <taxon>Bacillati</taxon>
        <taxon>Mycoplasmatota</taxon>
        <taxon>Mollicutes</taxon>
        <taxon>Mycoplasmataceae</taxon>
        <taxon>Mycoplasma</taxon>
    </lineage>
</organism>
<proteinExistence type="inferred from homology"/>
<sequence length="433" mass="48293">MKFVDSADLIIKAGKGGDGAVSFLHALFVPNGGPNGGDGGDGGSVYFQGDEGKHSLLDLKLQKKYSAQDGFKGDIKNMHGANGEDKIIKVPVGTILYDKKTNTILADINENNKLVLIAKGGKGGKGNARFANSRNKAPTIFEAGELGQEFEIRAELKVLADVGFVGLPNAGKSTLLRAISNSKPVVADYPFTTINPQLGVARTKNNDTFIVADLPGLIQGASLGKGLGHQFLKHIERCLVICHIIDASGNFGSEDIIKNYELIRNELKAYNLNLEKRAEIIVLNKMDLDEAQLNLLDEKIINYFKNKKVVQISGLKKENIDQLLFMIYEELKIAKKQPLWELDKNNDQDEIAIYKFEEQKEDIQVYNKGNNRWEIAGETIFKIYQKFPIWTEDNLLMFNEKLKETGVYETLVKKGIKKGDFVKVFDYELEWTD</sequence>
<feature type="chain" id="PRO_0000386068" description="GTPase Obg">
    <location>
        <begin position="1"/>
        <end position="433"/>
    </location>
</feature>
<feature type="domain" description="Obg" evidence="3">
    <location>
        <begin position="1"/>
        <end position="159"/>
    </location>
</feature>
<feature type="domain" description="OBG-type G" evidence="1">
    <location>
        <begin position="160"/>
        <end position="332"/>
    </location>
</feature>
<feature type="domain" description="OCT" evidence="2">
    <location>
        <begin position="355"/>
        <end position="433"/>
    </location>
</feature>
<feature type="binding site" evidence="1">
    <location>
        <begin position="166"/>
        <end position="173"/>
    </location>
    <ligand>
        <name>GTP</name>
        <dbReference type="ChEBI" id="CHEBI:37565"/>
    </ligand>
</feature>
<feature type="binding site" evidence="1">
    <location>
        <position position="173"/>
    </location>
    <ligand>
        <name>Mg(2+)</name>
        <dbReference type="ChEBI" id="CHEBI:18420"/>
    </ligand>
</feature>
<feature type="binding site" evidence="1">
    <location>
        <begin position="191"/>
        <end position="195"/>
    </location>
    <ligand>
        <name>GTP</name>
        <dbReference type="ChEBI" id="CHEBI:37565"/>
    </ligand>
</feature>
<feature type="binding site" evidence="1">
    <location>
        <position position="193"/>
    </location>
    <ligand>
        <name>Mg(2+)</name>
        <dbReference type="ChEBI" id="CHEBI:18420"/>
    </ligand>
</feature>
<feature type="binding site" evidence="1">
    <location>
        <begin position="213"/>
        <end position="216"/>
    </location>
    <ligand>
        <name>GTP</name>
        <dbReference type="ChEBI" id="CHEBI:37565"/>
    </ligand>
</feature>
<feature type="binding site" evidence="1">
    <location>
        <begin position="284"/>
        <end position="287"/>
    </location>
    <ligand>
        <name>GTP</name>
        <dbReference type="ChEBI" id="CHEBI:37565"/>
    </ligand>
</feature>
<feature type="binding site" evidence="1">
    <location>
        <begin position="313"/>
        <end position="315"/>
    </location>
    <ligand>
        <name>GTP</name>
        <dbReference type="ChEBI" id="CHEBI:37565"/>
    </ligand>
</feature>
<comment type="function">
    <text evidence="1">An essential GTPase which binds GTP, GDP and possibly (p)ppGpp with moderate affinity, with high nucleotide exchange rates and a fairly low GTP hydrolysis rate. Plays a role in control of the cell cycle, stress response, ribosome biogenesis and in those bacteria that undergo differentiation, in morphogenesis control.</text>
</comment>
<comment type="cofactor">
    <cofactor evidence="1">
        <name>Mg(2+)</name>
        <dbReference type="ChEBI" id="CHEBI:18420"/>
    </cofactor>
</comment>
<comment type="subunit">
    <text evidence="1">Monomer.</text>
</comment>
<comment type="subcellular location">
    <subcellularLocation>
        <location evidence="1">Cytoplasm</location>
    </subcellularLocation>
</comment>
<comment type="similarity">
    <text evidence="1">Belongs to the TRAFAC class OBG-HflX-like GTPase superfamily. OBG GTPase family.</text>
</comment>
<dbReference type="EC" id="3.6.5.-" evidence="1"/>
<dbReference type="EMBL" id="CP000123">
    <property type="protein sequence ID" value="ABC01456.1"/>
    <property type="molecule type" value="Genomic_DNA"/>
</dbReference>
<dbReference type="SMR" id="Q2SRV9"/>
<dbReference type="GeneID" id="23778511"/>
<dbReference type="KEGG" id="mcp:MCAP_0532"/>
<dbReference type="HOGENOM" id="CLU_011747_2_1_14"/>
<dbReference type="PhylomeDB" id="Q2SRV9"/>
<dbReference type="Proteomes" id="UP000001928">
    <property type="component" value="Chromosome"/>
</dbReference>
<dbReference type="GO" id="GO:0005737">
    <property type="term" value="C:cytoplasm"/>
    <property type="evidence" value="ECO:0007669"/>
    <property type="project" value="UniProtKB-SubCell"/>
</dbReference>
<dbReference type="GO" id="GO:0005525">
    <property type="term" value="F:GTP binding"/>
    <property type="evidence" value="ECO:0007669"/>
    <property type="project" value="UniProtKB-UniRule"/>
</dbReference>
<dbReference type="GO" id="GO:0003924">
    <property type="term" value="F:GTPase activity"/>
    <property type="evidence" value="ECO:0007669"/>
    <property type="project" value="UniProtKB-UniRule"/>
</dbReference>
<dbReference type="GO" id="GO:0000287">
    <property type="term" value="F:magnesium ion binding"/>
    <property type="evidence" value="ECO:0007669"/>
    <property type="project" value="InterPro"/>
</dbReference>
<dbReference type="GO" id="GO:0042254">
    <property type="term" value="P:ribosome biogenesis"/>
    <property type="evidence" value="ECO:0007669"/>
    <property type="project" value="UniProtKB-UniRule"/>
</dbReference>
<dbReference type="CDD" id="cd01898">
    <property type="entry name" value="Obg"/>
    <property type="match status" value="1"/>
</dbReference>
<dbReference type="FunFam" id="2.70.210.12:FF:000001">
    <property type="entry name" value="GTPase Obg"/>
    <property type="match status" value="1"/>
</dbReference>
<dbReference type="Gene3D" id="3.30.300.350">
    <property type="entry name" value="GTP-binding protein OBG, C-terminal domain"/>
    <property type="match status" value="1"/>
</dbReference>
<dbReference type="Gene3D" id="2.70.210.12">
    <property type="entry name" value="GTP1/OBG domain"/>
    <property type="match status" value="1"/>
</dbReference>
<dbReference type="Gene3D" id="3.40.50.300">
    <property type="entry name" value="P-loop containing nucleotide triphosphate hydrolases"/>
    <property type="match status" value="1"/>
</dbReference>
<dbReference type="HAMAP" id="MF_01454">
    <property type="entry name" value="GTPase_Obg"/>
    <property type="match status" value="1"/>
</dbReference>
<dbReference type="InterPro" id="IPR031167">
    <property type="entry name" value="G_OBG"/>
</dbReference>
<dbReference type="InterPro" id="IPR006073">
    <property type="entry name" value="GTP-bd"/>
</dbReference>
<dbReference type="InterPro" id="IPR014100">
    <property type="entry name" value="GTP-bd_Obg/CgtA"/>
</dbReference>
<dbReference type="InterPro" id="IPR036346">
    <property type="entry name" value="GTP-bd_prot_GTP1/OBG_C_sf"/>
</dbReference>
<dbReference type="InterPro" id="IPR006074">
    <property type="entry name" value="GTP1-OBG_CS"/>
</dbReference>
<dbReference type="InterPro" id="IPR006169">
    <property type="entry name" value="GTP1_OBG_dom"/>
</dbReference>
<dbReference type="InterPro" id="IPR036726">
    <property type="entry name" value="GTP1_OBG_dom_sf"/>
</dbReference>
<dbReference type="InterPro" id="IPR045086">
    <property type="entry name" value="OBG_GTPase"/>
</dbReference>
<dbReference type="InterPro" id="IPR015349">
    <property type="entry name" value="OCT_dom"/>
</dbReference>
<dbReference type="InterPro" id="IPR027417">
    <property type="entry name" value="P-loop_NTPase"/>
</dbReference>
<dbReference type="InterPro" id="IPR005225">
    <property type="entry name" value="Small_GTP-bd"/>
</dbReference>
<dbReference type="NCBIfam" id="TIGR02729">
    <property type="entry name" value="Obg_CgtA"/>
    <property type="match status" value="1"/>
</dbReference>
<dbReference type="NCBIfam" id="TIGR03595">
    <property type="entry name" value="Obg_CgtA_exten"/>
    <property type="match status" value="1"/>
</dbReference>
<dbReference type="NCBIfam" id="NF008955">
    <property type="entry name" value="PRK12297.1"/>
    <property type="match status" value="1"/>
</dbReference>
<dbReference type="NCBIfam" id="NF008956">
    <property type="entry name" value="PRK12299.1"/>
    <property type="match status" value="1"/>
</dbReference>
<dbReference type="NCBIfam" id="TIGR00231">
    <property type="entry name" value="small_GTP"/>
    <property type="match status" value="1"/>
</dbReference>
<dbReference type="PANTHER" id="PTHR11702">
    <property type="entry name" value="DEVELOPMENTALLY REGULATED GTP-BINDING PROTEIN-RELATED"/>
    <property type="match status" value="1"/>
</dbReference>
<dbReference type="PANTHER" id="PTHR11702:SF31">
    <property type="entry name" value="MITOCHONDRIAL RIBOSOME-ASSOCIATED GTPASE 2"/>
    <property type="match status" value="1"/>
</dbReference>
<dbReference type="Pfam" id="PF09269">
    <property type="entry name" value="DUF1967"/>
    <property type="match status" value="1"/>
</dbReference>
<dbReference type="Pfam" id="PF01018">
    <property type="entry name" value="GTP1_OBG"/>
    <property type="match status" value="1"/>
</dbReference>
<dbReference type="Pfam" id="PF01926">
    <property type="entry name" value="MMR_HSR1"/>
    <property type="match status" value="1"/>
</dbReference>
<dbReference type="PIRSF" id="PIRSF002401">
    <property type="entry name" value="GTP_bd_Obg/CgtA"/>
    <property type="match status" value="1"/>
</dbReference>
<dbReference type="PRINTS" id="PR00326">
    <property type="entry name" value="GTP1OBG"/>
</dbReference>
<dbReference type="SUPFAM" id="SSF102741">
    <property type="entry name" value="Obg GTP-binding protein C-terminal domain"/>
    <property type="match status" value="1"/>
</dbReference>
<dbReference type="SUPFAM" id="SSF82051">
    <property type="entry name" value="Obg GTP-binding protein N-terminal domain"/>
    <property type="match status" value="1"/>
</dbReference>
<dbReference type="SUPFAM" id="SSF52540">
    <property type="entry name" value="P-loop containing nucleoside triphosphate hydrolases"/>
    <property type="match status" value="1"/>
</dbReference>
<dbReference type="PROSITE" id="PS51710">
    <property type="entry name" value="G_OBG"/>
    <property type="match status" value="1"/>
</dbReference>
<dbReference type="PROSITE" id="PS00905">
    <property type="entry name" value="GTP1_OBG"/>
    <property type="match status" value="1"/>
</dbReference>
<dbReference type="PROSITE" id="PS51883">
    <property type="entry name" value="OBG"/>
    <property type="match status" value="1"/>
</dbReference>
<dbReference type="PROSITE" id="PS51881">
    <property type="entry name" value="OCT"/>
    <property type="match status" value="1"/>
</dbReference>
<reference key="1">
    <citation type="submission" date="2005-09" db="EMBL/GenBank/DDBJ databases">
        <authorList>
            <person name="Glass J.I."/>
            <person name="Lartigue C."/>
            <person name="Pfannkoch C."/>
            <person name="Baden-Tillson H."/>
            <person name="Smith H.O."/>
            <person name="Venter J.C."/>
            <person name="Roske K."/>
            <person name="Wise K.S."/>
            <person name="Calcutt M.J."/>
            <person name="Nelson W.C."/>
            <person name="Nierman W.C."/>
        </authorList>
    </citation>
    <scope>NUCLEOTIDE SEQUENCE [LARGE SCALE GENOMIC DNA]</scope>
    <source>
        <strain>California kid / ATCC 27343 / NCTC 10154</strain>
    </source>
</reference>